<protein>
    <recommendedName>
        <fullName evidence="1">Bifunctional protein GlmU</fullName>
    </recommendedName>
    <domain>
        <recommendedName>
            <fullName evidence="1">UDP-N-acetylglucosamine pyrophosphorylase</fullName>
            <ecNumber evidence="1">2.7.7.23</ecNumber>
        </recommendedName>
        <alternativeName>
            <fullName evidence="1">N-acetylglucosamine-1-phosphate uridyltransferase</fullName>
        </alternativeName>
    </domain>
    <domain>
        <recommendedName>
            <fullName evidence="1">Glucosamine-1-phosphate N-acetyltransferase</fullName>
            <ecNumber evidence="1">2.3.1.157</ecNumber>
        </recommendedName>
    </domain>
</protein>
<evidence type="ECO:0000255" key="1">
    <source>
        <dbReference type="HAMAP-Rule" id="MF_01631"/>
    </source>
</evidence>
<gene>
    <name evidence="1" type="primary">glmU</name>
    <name type="ordered locus">Dhaf_0091</name>
</gene>
<dbReference type="EC" id="2.7.7.23" evidence="1"/>
<dbReference type="EC" id="2.3.1.157" evidence="1"/>
<dbReference type="EMBL" id="CP001336">
    <property type="protein sequence ID" value="ACL18160.1"/>
    <property type="molecule type" value="Genomic_DNA"/>
</dbReference>
<dbReference type="RefSeq" id="WP_015942565.1">
    <property type="nucleotide sequence ID" value="NC_011830.1"/>
</dbReference>
<dbReference type="SMR" id="B8FY55"/>
<dbReference type="KEGG" id="dhd:Dhaf_0091"/>
<dbReference type="HOGENOM" id="CLU_029499_15_2_9"/>
<dbReference type="UniPathway" id="UPA00113">
    <property type="reaction ID" value="UER00532"/>
</dbReference>
<dbReference type="UniPathway" id="UPA00113">
    <property type="reaction ID" value="UER00533"/>
</dbReference>
<dbReference type="UniPathway" id="UPA00973"/>
<dbReference type="Proteomes" id="UP000007726">
    <property type="component" value="Chromosome"/>
</dbReference>
<dbReference type="GO" id="GO:0005737">
    <property type="term" value="C:cytoplasm"/>
    <property type="evidence" value="ECO:0007669"/>
    <property type="project" value="UniProtKB-SubCell"/>
</dbReference>
<dbReference type="GO" id="GO:0016020">
    <property type="term" value="C:membrane"/>
    <property type="evidence" value="ECO:0007669"/>
    <property type="project" value="GOC"/>
</dbReference>
<dbReference type="GO" id="GO:0019134">
    <property type="term" value="F:glucosamine-1-phosphate N-acetyltransferase activity"/>
    <property type="evidence" value="ECO:0007669"/>
    <property type="project" value="UniProtKB-UniRule"/>
</dbReference>
<dbReference type="GO" id="GO:0000287">
    <property type="term" value="F:magnesium ion binding"/>
    <property type="evidence" value="ECO:0007669"/>
    <property type="project" value="UniProtKB-UniRule"/>
</dbReference>
<dbReference type="GO" id="GO:0003977">
    <property type="term" value="F:UDP-N-acetylglucosamine diphosphorylase activity"/>
    <property type="evidence" value="ECO:0007669"/>
    <property type="project" value="UniProtKB-UniRule"/>
</dbReference>
<dbReference type="GO" id="GO:0000902">
    <property type="term" value="P:cell morphogenesis"/>
    <property type="evidence" value="ECO:0007669"/>
    <property type="project" value="UniProtKB-UniRule"/>
</dbReference>
<dbReference type="GO" id="GO:0071555">
    <property type="term" value="P:cell wall organization"/>
    <property type="evidence" value="ECO:0007669"/>
    <property type="project" value="UniProtKB-KW"/>
</dbReference>
<dbReference type="GO" id="GO:0009245">
    <property type="term" value="P:lipid A biosynthetic process"/>
    <property type="evidence" value="ECO:0007669"/>
    <property type="project" value="UniProtKB-UniRule"/>
</dbReference>
<dbReference type="GO" id="GO:0009252">
    <property type="term" value="P:peptidoglycan biosynthetic process"/>
    <property type="evidence" value="ECO:0007669"/>
    <property type="project" value="UniProtKB-UniRule"/>
</dbReference>
<dbReference type="GO" id="GO:0008360">
    <property type="term" value="P:regulation of cell shape"/>
    <property type="evidence" value="ECO:0007669"/>
    <property type="project" value="UniProtKB-KW"/>
</dbReference>
<dbReference type="GO" id="GO:0006048">
    <property type="term" value="P:UDP-N-acetylglucosamine biosynthetic process"/>
    <property type="evidence" value="ECO:0007669"/>
    <property type="project" value="UniProtKB-UniPathway"/>
</dbReference>
<dbReference type="CDD" id="cd02540">
    <property type="entry name" value="GT2_GlmU_N_bac"/>
    <property type="match status" value="1"/>
</dbReference>
<dbReference type="CDD" id="cd03353">
    <property type="entry name" value="LbH_GlmU_C"/>
    <property type="match status" value="1"/>
</dbReference>
<dbReference type="Gene3D" id="2.160.10.10">
    <property type="entry name" value="Hexapeptide repeat proteins"/>
    <property type="match status" value="1"/>
</dbReference>
<dbReference type="Gene3D" id="3.90.550.10">
    <property type="entry name" value="Spore Coat Polysaccharide Biosynthesis Protein SpsA, Chain A"/>
    <property type="match status" value="1"/>
</dbReference>
<dbReference type="HAMAP" id="MF_01631">
    <property type="entry name" value="GlmU"/>
    <property type="match status" value="1"/>
</dbReference>
<dbReference type="InterPro" id="IPR005882">
    <property type="entry name" value="Bifunctional_GlmU"/>
</dbReference>
<dbReference type="InterPro" id="IPR050065">
    <property type="entry name" value="GlmU-like"/>
</dbReference>
<dbReference type="InterPro" id="IPR038009">
    <property type="entry name" value="GlmU_C_LbH"/>
</dbReference>
<dbReference type="InterPro" id="IPR001451">
    <property type="entry name" value="Hexapep"/>
</dbReference>
<dbReference type="InterPro" id="IPR025877">
    <property type="entry name" value="MobA-like_NTP_Trfase"/>
</dbReference>
<dbReference type="InterPro" id="IPR029044">
    <property type="entry name" value="Nucleotide-diphossugar_trans"/>
</dbReference>
<dbReference type="InterPro" id="IPR011004">
    <property type="entry name" value="Trimer_LpxA-like_sf"/>
</dbReference>
<dbReference type="NCBIfam" id="TIGR01173">
    <property type="entry name" value="glmU"/>
    <property type="match status" value="1"/>
</dbReference>
<dbReference type="NCBIfam" id="NF010934">
    <property type="entry name" value="PRK14354.1"/>
    <property type="match status" value="1"/>
</dbReference>
<dbReference type="PANTHER" id="PTHR43584:SF3">
    <property type="entry name" value="BIFUNCTIONAL PROTEIN GLMU"/>
    <property type="match status" value="1"/>
</dbReference>
<dbReference type="PANTHER" id="PTHR43584">
    <property type="entry name" value="NUCLEOTIDYL TRANSFERASE"/>
    <property type="match status" value="1"/>
</dbReference>
<dbReference type="Pfam" id="PF14602">
    <property type="entry name" value="Hexapep_2"/>
    <property type="match status" value="1"/>
</dbReference>
<dbReference type="Pfam" id="PF12804">
    <property type="entry name" value="NTP_transf_3"/>
    <property type="match status" value="1"/>
</dbReference>
<dbReference type="SUPFAM" id="SSF53448">
    <property type="entry name" value="Nucleotide-diphospho-sugar transferases"/>
    <property type="match status" value="1"/>
</dbReference>
<dbReference type="SUPFAM" id="SSF51161">
    <property type="entry name" value="Trimeric LpxA-like enzymes"/>
    <property type="match status" value="1"/>
</dbReference>
<name>GLMU_DESHD</name>
<proteinExistence type="inferred from homology"/>
<comment type="function">
    <text evidence="1">Catalyzes the last two sequential reactions in the de novo biosynthetic pathway for UDP-N-acetylglucosamine (UDP-GlcNAc). The C-terminal domain catalyzes the transfer of acetyl group from acetyl coenzyme A to glucosamine-1-phosphate (GlcN-1-P) to produce N-acetylglucosamine-1-phosphate (GlcNAc-1-P), which is converted into UDP-GlcNAc by the transfer of uridine 5-monophosphate (from uridine 5-triphosphate), a reaction catalyzed by the N-terminal domain.</text>
</comment>
<comment type="catalytic activity">
    <reaction evidence="1">
        <text>alpha-D-glucosamine 1-phosphate + acetyl-CoA = N-acetyl-alpha-D-glucosamine 1-phosphate + CoA + H(+)</text>
        <dbReference type="Rhea" id="RHEA:13725"/>
        <dbReference type="ChEBI" id="CHEBI:15378"/>
        <dbReference type="ChEBI" id="CHEBI:57287"/>
        <dbReference type="ChEBI" id="CHEBI:57288"/>
        <dbReference type="ChEBI" id="CHEBI:57776"/>
        <dbReference type="ChEBI" id="CHEBI:58516"/>
        <dbReference type="EC" id="2.3.1.157"/>
    </reaction>
</comment>
<comment type="catalytic activity">
    <reaction evidence="1">
        <text>N-acetyl-alpha-D-glucosamine 1-phosphate + UTP + H(+) = UDP-N-acetyl-alpha-D-glucosamine + diphosphate</text>
        <dbReference type="Rhea" id="RHEA:13509"/>
        <dbReference type="ChEBI" id="CHEBI:15378"/>
        <dbReference type="ChEBI" id="CHEBI:33019"/>
        <dbReference type="ChEBI" id="CHEBI:46398"/>
        <dbReference type="ChEBI" id="CHEBI:57705"/>
        <dbReference type="ChEBI" id="CHEBI:57776"/>
        <dbReference type="EC" id="2.7.7.23"/>
    </reaction>
</comment>
<comment type="cofactor">
    <cofactor evidence="1">
        <name>Mg(2+)</name>
        <dbReference type="ChEBI" id="CHEBI:18420"/>
    </cofactor>
    <text evidence="1">Binds 1 Mg(2+) ion per subunit.</text>
</comment>
<comment type="pathway">
    <text evidence="1">Nucleotide-sugar biosynthesis; UDP-N-acetyl-alpha-D-glucosamine biosynthesis; N-acetyl-alpha-D-glucosamine 1-phosphate from alpha-D-glucosamine 6-phosphate (route II): step 2/2.</text>
</comment>
<comment type="pathway">
    <text evidence="1">Nucleotide-sugar biosynthesis; UDP-N-acetyl-alpha-D-glucosamine biosynthesis; UDP-N-acetyl-alpha-D-glucosamine from N-acetyl-alpha-D-glucosamine 1-phosphate: step 1/1.</text>
</comment>
<comment type="pathway">
    <text evidence="1">Bacterial outer membrane biogenesis; LPS lipid A biosynthesis.</text>
</comment>
<comment type="subunit">
    <text evidence="1">Homotrimer.</text>
</comment>
<comment type="subcellular location">
    <subcellularLocation>
        <location evidence="1">Cytoplasm</location>
    </subcellularLocation>
</comment>
<comment type="similarity">
    <text evidence="1">In the N-terminal section; belongs to the N-acetylglucosamine-1-phosphate uridyltransferase family.</text>
</comment>
<comment type="similarity">
    <text evidence="1">In the C-terminal section; belongs to the transferase hexapeptide repeat family.</text>
</comment>
<keyword id="KW-0012">Acyltransferase</keyword>
<keyword id="KW-0133">Cell shape</keyword>
<keyword id="KW-0961">Cell wall biogenesis/degradation</keyword>
<keyword id="KW-0963">Cytoplasm</keyword>
<keyword id="KW-0460">Magnesium</keyword>
<keyword id="KW-0479">Metal-binding</keyword>
<keyword id="KW-0511">Multifunctional enzyme</keyword>
<keyword id="KW-0548">Nucleotidyltransferase</keyword>
<keyword id="KW-0573">Peptidoglycan synthesis</keyword>
<keyword id="KW-0677">Repeat</keyword>
<keyword id="KW-0808">Transferase</keyword>
<accession>B8FY55</accession>
<reference key="1">
    <citation type="journal article" date="2012" name="BMC Microbiol.">
        <title>Genome sequence of Desulfitobacterium hafniense DCB-2, a Gram-positive anaerobe capable of dehalogenation and metal reduction.</title>
        <authorList>
            <person name="Kim S.H."/>
            <person name="Harzman C."/>
            <person name="Davis J.K."/>
            <person name="Hutcheson R."/>
            <person name="Broderick J.B."/>
            <person name="Marsh T.L."/>
            <person name="Tiedje J.M."/>
        </authorList>
    </citation>
    <scope>NUCLEOTIDE SEQUENCE [LARGE SCALE GENOMIC DNA]</scope>
    <source>
        <strain>DSM 10664 / DCB-2</strain>
    </source>
</reference>
<organism>
    <name type="scientific">Desulfitobacterium hafniense (strain DSM 10664 / DCB-2)</name>
    <dbReference type="NCBI Taxonomy" id="272564"/>
    <lineage>
        <taxon>Bacteria</taxon>
        <taxon>Bacillati</taxon>
        <taxon>Bacillota</taxon>
        <taxon>Clostridia</taxon>
        <taxon>Eubacteriales</taxon>
        <taxon>Desulfitobacteriaceae</taxon>
        <taxon>Desulfitobacterium</taxon>
    </lineage>
</organism>
<feature type="chain" id="PRO_1000186438" description="Bifunctional protein GlmU">
    <location>
        <begin position="1"/>
        <end position="453"/>
    </location>
</feature>
<feature type="region of interest" description="Pyrophosphorylase" evidence="1">
    <location>
        <begin position="1"/>
        <end position="228"/>
    </location>
</feature>
<feature type="region of interest" description="Linker" evidence="1">
    <location>
        <begin position="229"/>
        <end position="249"/>
    </location>
</feature>
<feature type="region of interest" description="N-acetyltransferase" evidence="1">
    <location>
        <begin position="250"/>
        <end position="453"/>
    </location>
</feature>
<feature type="active site" description="Proton acceptor" evidence="1">
    <location>
        <position position="361"/>
    </location>
</feature>
<feature type="binding site" evidence="1">
    <location>
        <position position="23"/>
    </location>
    <ligand>
        <name>UDP-N-acetyl-alpha-D-glucosamine</name>
        <dbReference type="ChEBI" id="CHEBI:57705"/>
    </ligand>
</feature>
<feature type="binding site" evidence="1">
    <location>
        <position position="73"/>
    </location>
    <ligand>
        <name>UDP-N-acetyl-alpha-D-glucosamine</name>
        <dbReference type="ChEBI" id="CHEBI:57705"/>
    </ligand>
</feature>
<feature type="binding site" evidence="1">
    <location>
        <begin position="78"/>
        <end position="79"/>
    </location>
    <ligand>
        <name>UDP-N-acetyl-alpha-D-glucosamine</name>
        <dbReference type="ChEBI" id="CHEBI:57705"/>
    </ligand>
</feature>
<feature type="binding site" evidence="1">
    <location>
        <begin position="100"/>
        <end position="102"/>
    </location>
    <ligand>
        <name>UDP-N-acetyl-alpha-D-glucosamine</name>
        <dbReference type="ChEBI" id="CHEBI:57705"/>
    </ligand>
</feature>
<feature type="binding site" evidence="1">
    <location>
        <position position="102"/>
    </location>
    <ligand>
        <name>Mg(2+)</name>
        <dbReference type="ChEBI" id="CHEBI:18420"/>
    </ligand>
</feature>
<feature type="binding site" evidence="1">
    <location>
        <position position="139"/>
    </location>
    <ligand>
        <name>UDP-N-acetyl-alpha-D-glucosamine</name>
        <dbReference type="ChEBI" id="CHEBI:57705"/>
    </ligand>
</feature>
<feature type="binding site" evidence="1">
    <location>
        <position position="153"/>
    </location>
    <ligand>
        <name>UDP-N-acetyl-alpha-D-glucosamine</name>
        <dbReference type="ChEBI" id="CHEBI:57705"/>
    </ligand>
</feature>
<feature type="binding site" evidence="1">
    <location>
        <position position="168"/>
    </location>
    <ligand>
        <name>UDP-N-acetyl-alpha-D-glucosamine</name>
        <dbReference type="ChEBI" id="CHEBI:57705"/>
    </ligand>
</feature>
<feature type="binding site" evidence="1">
    <location>
        <position position="226"/>
    </location>
    <ligand>
        <name>Mg(2+)</name>
        <dbReference type="ChEBI" id="CHEBI:18420"/>
    </ligand>
</feature>
<feature type="binding site" evidence="1">
    <location>
        <position position="226"/>
    </location>
    <ligand>
        <name>UDP-N-acetyl-alpha-D-glucosamine</name>
        <dbReference type="ChEBI" id="CHEBI:57705"/>
    </ligand>
</feature>
<feature type="binding site" evidence="1">
    <location>
        <position position="331"/>
    </location>
    <ligand>
        <name>UDP-N-acetyl-alpha-D-glucosamine</name>
        <dbReference type="ChEBI" id="CHEBI:57705"/>
    </ligand>
</feature>
<feature type="binding site" evidence="1">
    <location>
        <position position="349"/>
    </location>
    <ligand>
        <name>UDP-N-acetyl-alpha-D-glucosamine</name>
        <dbReference type="ChEBI" id="CHEBI:57705"/>
    </ligand>
</feature>
<feature type="binding site" evidence="1">
    <location>
        <position position="364"/>
    </location>
    <ligand>
        <name>UDP-N-acetyl-alpha-D-glucosamine</name>
        <dbReference type="ChEBI" id="CHEBI:57705"/>
    </ligand>
</feature>
<feature type="binding site" evidence="1">
    <location>
        <position position="375"/>
    </location>
    <ligand>
        <name>UDP-N-acetyl-alpha-D-glucosamine</name>
        <dbReference type="ChEBI" id="CHEBI:57705"/>
    </ligand>
</feature>
<feature type="binding site" evidence="1">
    <location>
        <position position="378"/>
    </location>
    <ligand>
        <name>acetyl-CoA</name>
        <dbReference type="ChEBI" id="CHEBI:57288"/>
    </ligand>
</feature>
<feature type="binding site" evidence="1">
    <location>
        <begin position="384"/>
        <end position="385"/>
    </location>
    <ligand>
        <name>acetyl-CoA</name>
        <dbReference type="ChEBI" id="CHEBI:57288"/>
    </ligand>
</feature>
<feature type="binding site" evidence="1">
    <location>
        <position position="403"/>
    </location>
    <ligand>
        <name>acetyl-CoA</name>
        <dbReference type="ChEBI" id="CHEBI:57288"/>
    </ligand>
</feature>
<feature type="binding site" evidence="1">
    <location>
        <position position="421"/>
    </location>
    <ligand>
        <name>acetyl-CoA</name>
        <dbReference type="ChEBI" id="CHEBI:57288"/>
    </ligand>
</feature>
<feature type="binding site" evidence="1">
    <location>
        <position position="438"/>
    </location>
    <ligand>
        <name>acetyl-CoA</name>
        <dbReference type="ChEBI" id="CHEBI:57288"/>
    </ligand>
</feature>
<sequence length="453" mass="49434">MPHWAAVIMAAGKGTRMKSKLPKVMHTLAGKPMLQHVLDCVRSVEIPRSMVVLGHGREQIEATLDDRTEVVVQEEQCGTGHAIMQAIPHCHEVDHIIVLSGDQPLIRPETLRNLVRIHIEHNAAATLLTACFENPHGLGRILKEGDQFLRVVEEKDATPEERLIQEINTGTYCFNVAKLREALKNITPKNAQGEYYLTDVFAVFHAQGEVIRTYCTEDVHEALGINSRAQLAAAEDVARQRILSYWMEEGVTIIDPRSTFIEAGVVLQPDVVLQPFTILKGRTQVAEDAVIGPHTTLTDCTVGAGSEVSHTVGNQAVIGGHCTIGPYAYLRPGTVLQDKVKVGDFVEIKNSQIGEGSKIPHLSYVGDSQVGKSVNIGAGTITCNYDGVNKYKTIIRDKAFLGSNTNLVAPVEIGEGSVTGAGSTISKNVPANTLAIERSTQKHIENWVRNKKK</sequence>